<reference key="1">
    <citation type="journal article" date="1995" name="Biosci. Biotechnol. Biochem.">
        <title>Molecular cloning and nucleotide sequence of purine nucleoside phosphorylase and uridine phosphorylase genes from Klebsiella sp.</title>
        <authorList>
            <person name="Takehara M."/>
            <person name="Ling F."/>
            <person name="Izawa S."/>
            <person name="Inoue Y."/>
            <person name="Kimura A."/>
        </authorList>
    </citation>
    <scope>NUCLEOTIDE SEQUENCE [GENOMIC DNA]</scope>
    <source>
        <strain>LF1202</strain>
    </source>
</reference>
<gene>
    <name evidence="2" type="primary">deoD</name>
    <name type="synonym">pnp</name>
</gene>
<comment type="function">
    <text evidence="2">Catalyzes the reversible phosphorolytic breakdown of the N-glycosidic bond in the beta-(deoxy)ribonucleoside molecules, with the formation of the corresponding free purine bases and pentose-1-phosphate.</text>
</comment>
<comment type="catalytic activity">
    <reaction evidence="2">
        <text>a purine D-ribonucleoside + phosphate = a purine nucleobase + alpha-D-ribose 1-phosphate</text>
        <dbReference type="Rhea" id="RHEA:19805"/>
        <dbReference type="ChEBI" id="CHEBI:26386"/>
        <dbReference type="ChEBI" id="CHEBI:43474"/>
        <dbReference type="ChEBI" id="CHEBI:57720"/>
        <dbReference type="ChEBI" id="CHEBI:142355"/>
        <dbReference type="EC" id="2.4.2.1"/>
    </reaction>
</comment>
<comment type="catalytic activity">
    <reaction evidence="2">
        <text>a purine 2'-deoxy-D-ribonucleoside + phosphate = a purine nucleobase + 2-deoxy-alpha-D-ribose 1-phosphate</text>
        <dbReference type="Rhea" id="RHEA:36431"/>
        <dbReference type="ChEBI" id="CHEBI:26386"/>
        <dbReference type="ChEBI" id="CHEBI:43474"/>
        <dbReference type="ChEBI" id="CHEBI:57259"/>
        <dbReference type="ChEBI" id="CHEBI:142361"/>
        <dbReference type="EC" id="2.4.2.1"/>
    </reaction>
</comment>
<comment type="subunit">
    <text evidence="2">Homohexamer; trimer of homodimers.</text>
</comment>
<comment type="similarity">
    <text evidence="2">Belongs to the PNP/UDP phosphorylase family.</text>
</comment>
<name>DEOD_KLEPN</name>
<feature type="chain" id="PRO_0000063139" description="Purine nucleoside phosphorylase DeoD-type">
    <location>
        <begin position="1"/>
        <end position="239"/>
    </location>
</feature>
<feature type="active site" description="Proton donor" evidence="2">
    <location>
        <position position="205"/>
    </location>
</feature>
<feature type="binding site" evidence="1">
    <location>
        <position position="5"/>
    </location>
    <ligand>
        <name>a purine D-ribonucleoside</name>
        <dbReference type="ChEBI" id="CHEBI:142355"/>
        <note>ligand shared between dimeric partners</note>
    </ligand>
</feature>
<feature type="binding site" description="in other chain" evidence="1">
    <location>
        <position position="21"/>
    </location>
    <ligand>
        <name>phosphate</name>
        <dbReference type="ChEBI" id="CHEBI:43474"/>
        <note>ligand shared between dimeric partners</note>
    </ligand>
</feature>
<feature type="binding site" description="in other chain" evidence="1">
    <location>
        <position position="25"/>
    </location>
    <ligand>
        <name>phosphate</name>
        <dbReference type="ChEBI" id="CHEBI:43474"/>
        <note>ligand shared between dimeric partners</note>
    </ligand>
</feature>
<feature type="binding site" evidence="1">
    <location>
        <position position="44"/>
    </location>
    <ligand>
        <name>phosphate</name>
        <dbReference type="ChEBI" id="CHEBI:43474"/>
        <note>ligand shared between dimeric partners</note>
    </ligand>
</feature>
<feature type="binding site" description="in other chain" evidence="1">
    <location>
        <begin position="89"/>
        <end position="92"/>
    </location>
    <ligand>
        <name>phosphate</name>
        <dbReference type="ChEBI" id="CHEBI:43474"/>
        <note>ligand shared between dimeric partners</note>
    </ligand>
</feature>
<feature type="binding site" description="in other chain" evidence="1">
    <location>
        <begin position="180"/>
        <end position="182"/>
    </location>
    <ligand>
        <name>a purine D-ribonucleoside</name>
        <dbReference type="ChEBI" id="CHEBI:142355"/>
        <note>ligand shared between dimeric partners</note>
    </ligand>
</feature>
<feature type="binding site" description="in other chain" evidence="1">
    <location>
        <begin position="204"/>
        <end position="205"/>
    </location>
    <ligand>
        <name>a purine D-ribonucleoside</name>
        <dbReference type="ChEBI" id="CHEBI:142355"/>
        <note>ligand shared between dimeric partners</note>
    </ligand>
</feature>
<feature type="site" description="Important for catalytic activity" evidence="2">
    <location>
        <position position="218"/>
    </location>
</feature>
<proteinExistence type="inferred from homology"/>
<organism>
    <name type="scientific">Klebsiella pneumoniae</name>
    <dbReference type="NCBI Taxonomy" id="573"/>
    <lineage>
        <taxon>Bacteria</taxon>
        <taxon>Pseudomonadati</taxon>
        <taxon>Pseudomonadota</taxon>
        <taxon>Gammaproteobacteria</taxon>
        <taxon>Enterobacterales</taxon>
        <taxon>Enterobacteriaceae</taxon>
        <taxon>Klebsiella/Raoultella group</taxon>
        <taxon>Klebsiella</taxon>
        <taxon>Klebsiella pneumoniae complex</taxon>
    </lineage>
</organism>
<sequence>MATPHINAEMGDFADVVLMPGDPLRANSIAETFLEDAREVNNVRGMLGFTGTYKGRRKISVMGHGMGIPSCSIYTKELITDFGVKKIIRVGSCGAVREDVKLREVVIGHGACTDSKVNRLRFKDHDFPAIADFGMVRNAVDAKALGVEARRSNIFSADLFYTPDPSMFDVMEKYGILGVEMEAAGIYGVAAEFGAKALTICTVSDHIRTHEQTIAAERQTTFNDMIKIALESVLLRDKE</sequence>
<protein>
    <recommendedName>
        <fullName evidence="2">Purine nucleoside phosphorylase DeoD-type</fullName>
        <shortName evidence="2">PNP</shortName>
        <ecNumber evidence="2">2.4.2.1</ecNumber>
    </recommendedName>
</protein>
<evidence type="ECO:0000250" key="1">
    <source>
        <dbReference type="UniProtKB" id="P50389"/>
    </source>
</evidence>
<evidence type="ECO:0000255" key="2">
    <source>
        <dbReference type="HAMAP-Rule" id="MF_01627"/>
    </source>
</evidence>
<dbReference type="EC" id="2.4.2.1" evidence="2"/>
<dbReference type="EMBL" id="X87881">
    <property type="protein sequence ID" value="CAA61136.1"/>
    <property type="molecule type" value="Genomic_DNA"/>
</dbReference>
<dbReference type="SMR" id="Q59482"/>
<dbReference type="GO" id="GO:0005829">
    <property type="term" value="C:cytosol"/>
    <property type="evidence" value="ECO:0007669"/>
    <property type="project" value="TreeGrafter"/>
</dbReference>
<dbReference type="GO" id="GO:0004731">
    <property type="term" value="F:purine-nucleoside phosphorylase activity"/>
    <property type="evidence" value="ECO:0007669"/>
    <property type="project" value="UniProtKB-UniRule"/>
</dbReference>
<dbReference type="GO" id="GO:0006152">
    <property type="term" value="P:purine nucleoside catabolic process"/>
    <property type="evidence" value="ECO:0007669"/>
    <property type="project" value="TreeGrafter"/>
</dbReference>
<dbReference type="CDD" id="cd09006">
    <property type="entry name" value="PNP_EcPNPI-like"/>
    <property type="match status" value="1"/>
</dbReference>
<dbReference type="FunFam" id="3.40.50.1580:FF:000002">
    <property type="entry name" value="Purine nucleoside phosphorylase DeoD-type"/>
    <property type="match status" value="1"/>
</dbReference>
<dbReference type="Gene3D" id="3.40.50.1580">
    <property type="entry name" value="Nucleoside phosphorylase domain"/>
    <property type="match status" value="1"/>
</dbReference>
<dbReference type="HAMAP" id="MF_01627">
    <property type="entry name" value="Pur_nucleosid_phosp"/>
    <property type="match status" value="1"/>
</dbReference>
<dbReference type="InterPro" id="IPR004402">
    <property type="entry name" value="DeoD-type"/>
</dbReference>
<dbReference type="InterPro" id="IPR018016">
    <property type="entry name" value="Nucleoside_phosphorylase_CS"/>
</dbReference>
<dbReference type="InterPro" id="IPR000845">
    <property type="entry name" value="Nucleoside_phosphorylase_d"/>
</dbReference>
<dbReference type="InterPro" id="IPR035994">
    <property type="entry name" value="Nucleoside_phosphorylase_sf"/>
</dbReference>
<dbReference type="NCBIfam" id="TIGR00107">
    <property type="entry name" value="deoD"/>
    <property type="match status" value="1"/>
</dbReference>
<dbReference type="NCBIfam" id="NF004489">
    <property type="entry name" value="PRK05819.1"/>
    <property type="match status" value="1"/>
</dbReference>
<dbReference type="NCBIfam" id="NF009914">
    <property type="entry name" value="PRK13374.1"/>
    <property type="match status" value="1"/>
</dbReference>
<dbReference type="PANTHER" id="PTHR43691:SF2">
    <property type="entry name" value="PURINE NUCLEOSIDE PHOSPHORYLASE DEOD-TYPE"/>
    <property type="match status" value="1"/>
</dbReference>
<dbReference type="PANTHER" id="PTHR43691">
    <property type="entry name" value="URIDINE PHOSPHORYLASE"/>
    <property type="match status" value="1"/>
</dbReference>
<dbReference type="Pfam" id="PF01048">
    <property type="entry name" value="PNP_UDP_1"/>
    <property type="match status" value="1"/>
</dbReference>
<dbReference type="SUPFAM" id="SSF53167">
    <property type="entry name" value="Purine and uridine phosphorylases"/>
    <property type="match status" value="1"/>
</dbReference>
<dbReference type="PROSITE" id="PS01232">
    <property type="entry name" value="PNP_UDP_1"/>
    <property type="match status" value="1"/>
</dbReference>
<keyword id="KW-0328">Glycosyltransferase</keyword>
<keyword id="KW-0808">Transferase</keyword>
<accession>Q59482</accession>